<protein>
    <recommendedName>
        <fullName evidence="2">Large ribosomal subunit protein eL42</fullName>
    </recommendedName>
    <alternativeName>
        <fullName>60S ribosomal protein L41</fullName>
    </alternativeName>
    <alternativeName>
        <fullName>60S ribosomal protein L44</fullName>
    </alternativeName>
</protein>
<sequence length="106" mass="12257">MVNVPKTRKTYCKGKECRKHTQHKVTQYKAGKASLFAQGKRRYDRKQRGYGGQTKQIFHKKAKTTKKVVLKLECVVCKTKAQLSLKRCKHFELGGDKKQKGQALQF</sequence>
<accession>P31028</accession>
<evidence type="ECO:0000250" key="1"/>
<evidence type="ECO:0000305" key="2"/>
<name>RL44_SCHOC</name>
<dbReference type="EMBL" id="X70807">
    <property type="protein sequence ID" value="CAA50074.1"/>
    <property type="molecule type" value="Genomic_DNA"/>
</dbReference>
<dbReference type="PIR" id="S32481">
    <property type="entry name" value="S32481"/>
</dbReference>
<dbReference type="SMR" id="P31028"/>
<dbReference type="GO" id="GO:1990904">
    <property type="term" value="C:ribonucleoprotein complex"/>
    <property type="evidence" value="ECO:0007669"/>
    <property type="project" value="UniProtKB-KW"/>
</dbReference>
<dbReference type="GO" id="GO:0005840">
    <property type="term" value="C:ribosome"/>
    <property type="evidence" value="ECO:0007669"/>
    <property type="project" value="UniProtKB-KW"/>
</dbReference>
<dbReference type="GO" id="GO:0003735">
    <property type="term" value="F:structural constituent of ribosome"/>
    <property type="evidence" value="ECO:0007669"/>
    <property type="project" value="InterPro"/>
</dbReference>
<dbReference type="GO" id="GO:0046677">
    <property type="term" value="P:response to antibiotic"/>
    <property type="evidence" value="ECO:0007669"/>
    <property type="project" value="UniProtKB-KW"/>
</dbReference>
<dbReference type="GO" id="GO:0046898">
    <property type="term" value="P:response to cycloheximide"/>
    <property type="evidence" value="ECO:0007669"/>
    <property type="project" value="UniProtKB-KW"/>
</dbReference>
<dbReference type="GO" id="GO:0006412">
    <property type="term" value="P:translation"/>
    <property type="evidence" value="ECO:0007669"/>
    <property type="project" value="InterPro"/>
</dbReference>
<dbReference type="FunFam" id="3.10.450.80:FF:000001">
    <property type="entry name" value="60S ribosomal protein L44"/>
    <property type="match status" value="1"/>
</dbReference>
<dbReference type="Gene3D" id="3.10.450.80">
    <property type="match status" value="1"/>
</dbReference>
<dbReference type="InterPro" id="IPR000552">
    <property type="entry name" value="Ribosomal_eL44"/>
</dbReference>
<dbReference type="InterPro" id="IPR053708">
    <property type="entry name" value="Ribosomal_LSU_eL42"/>
</dbReference>
<dbReference type="InterPro" id="IPR011332">
    <property type="entry name" value="Ribosomal_zn-bd"/>
</dbReference>
<dbReference type="PANTHER" id="PTHR10369">
    <property type="entry name" value="60S RIBOSOMAL PROTEIN L36A/L44"/>
    <property type="match status" value="1"/>
</dbReference>
<dbReference type="Pfam" id="PF00935">
    <property type="entry name" value="Ribosomal_L44"/>
    <property type="match status" value="1"/>
</dbReference>
<dbReference type="SUPFAM" id="SSF57829">
    <property type="entry name" value="Zn-binding ribosomal proteins"/>
    <property type="match status" value="1"/>
</dbReference>
<dbReference type="PROSITE" id="PS01172">
    <property type="entry name" value="RIBOSOMAL_L44E"/>
    <property type="match status" value="1"/>
</dbReference>
<keyword id="KW-0046">Antibiotic resistance</keyword>
<keyword id="KW-0196">Cycloheximide resistance</keyword>
<keyword id="KW-0687">Ribonucleoprotein</keyword>
<keyword id="KW-0689">Ribosomal protein</keyword>
<organism>
    <name type="scientific">Schwanniomyces occidentalis</name>
    <name type="common">Yeast</name>
    <name type="synonym">Debaryomyces occidentalis</name>
    <dbReference type="NCBI Taxonomy" id="27300"/>
    <lineage>
        <taxon>Eukaryota</taxon>
        <taxon>Fungi</taxon>
        <taxon>Dikarya</taxon>
        <taxon>Ascomycota</taxon>
        <taxon>Saccharomycotina</taxon>
        <taxon>Pichiomycetes</taxon>
        <taxon>Debaryomycetaceae</taxon>
        <taxon>Schwanniomyces</taxon>
    </lineage>
</organism>
<proteinExistence type="inferred from homology"/>
<comment type="miscellaneous">
    <text>Confers resistance to cycloheximide, an inhibitor of polypeptide elongation.</text>
</comment>
<comment type="similarity">
    <text evidence="2">Belongs to the eukaryotic ribosomal protein eL42 family.</text>
</comment>
<reference key="1">
    <citation type="journal article" date="1993" name="Eur. J. Biochem.">
        <title>Two different genes from Schwanniomyces occidentalis determine ribosomal resistance to cycloheximide.</title>
        <authorList>
            <person name="del Pozo L."/>
            <person name="Abarca D."/>
            <person name="Hoenicka J."/>
            <person name="Jimenez A."/>
        </authorList>
    </citation>
    <scope>NUCLEOTIDE SEQUENCE [GENOMIC DNA]</scope>
</reference>
<gene>
    <name type="primary">RPL44</name>
    <name type="synonym">SCR2</name>
</gene>
<feature type="initiator methionine" description="Removed" evidence="1">
    <location>
        <position position="1"/>
    </location>
</feature>
<feature type="chain" id="PRO_0000149146" description="Large ribosomal subunit protein eL42">
    <location>
        <begin position="2"/>
        <end position="106"/>
    </location>
</feature>